<keyword id="KW-0378">Hydrolase</keyword>
<keyword id="KW-1185">Reference proteome</keyword>
<organism>
    <name type="scientific">Mus musculus</name>
    <name type="common">Mouse</name>
    <dbReference type="NCBI Taxonomy" id="10090"/>
    <lineage>
        <taxon>Eukaryota</taxon>
        <taxon>Metazoa</taxon>
        <taxon>Chordata</taxon>
        <taxon>Craniata</taxon>
        <taxon>Vertebrata</taxon>
        <taxon>Euteleostomi</taxon>
        <taxon>Mammalia</taxon>
        <taxon>Eutheria</taxon>
        <taxon>Euarchontoglires</taxon>
        <taxon>Glires</taxon>
        <taxon>Rodentia</taxon>
        <taxon>Myomorpha</taxon>
        <taxon>Muroidea</taxon>
        <taxon>Muridae</taxon>
        <taxon>Murinae</taxon>
        <taxon>Mus</taxon>
        <taxon>Mus</taxon>
    </lineage>
</organism>
<reference key="1">
    <citation type="journal article" date="2005" name="Science">
        <title>The transcriptional landscape of the mammalian genome.</title>
        <authorList>
            <person name="Carninci P."/>
            <person name="Kasukawa T."/>
            <person name="Katayama S."/>
            <person name="Gough J."/>
            <person name="Frith M.C."/>
            <person name="Maeda N."/>
            <person name="Oyama R."/>
            <person name="Ravasi T."/>
            <person name="Lenhard B."/>
            <person name="Wells C."/>
            <person name="Kodzius R."/>
            <person name="Shimokawa K."/>
            <person name="Bajic V.B."/>
            <person name="Brenner S.E."/>
            <person name="Batalov S."/>
            <person name="Forrest A.R."/>
            <person name="Zavolan M."/>
            <person name="Davis M.J."/>
            <person name="Wilming L.G."/>
            <person name="Aidinis V."/>
            <person name="Allen J.E."/>
            <person name="Ambesi-Impiombato A."/>
            <person name="Apweiler R."/>
            <person name="Aturaliya R.N."/>
            <person name="Bailey T.L."/>
            <person name="Bansal M."/>
            <person name="Baxter L."/>
            <person name="Beisel K.W."/>
            <person name="Bersano T."/>
            <person name="Bono H."/>
            <person name="Chalk A.M."/>
            <person name="Chiu K.P."/>
            <person name="Choudhary V."/>
            <person name="Christoffels A."/>
            <person name="Clutterbuck D.R."/>
            <person name="Crowe M.L."/>
            <person name="Dalla E."/>
            <person name="Dalrymple B.P."/>
            <person name="de Bono B."/>
            <person name="Della Gatta G."/>
            <person name="di Bernardo D."/>
            <person name="Down T."/>
            <person name="Engstrom P."/>
            <person name="Fagiolini M."/>
            <person name="Faulkner G."/>
            <person name="Fletcher C.F."/>
            <person name="Fukushima T."/>
            <person name="Furuno M."/>
            <person name="Futaki S."/>
            <person name="Gariboldi M."/>
            <person name="Georgii-Hemming P."/>
            <person name="Gingeras T.R."/>
            <person name="Gojobori T."/>
            <person name="Green R.E."/>
            <person name="Gustincich S."/>
            <person name="Harbers M."/>
            <person name="Hayashi Y."/>
            <person name="Hensch T.K."/>
            <person name="Hirokawa N."/>
            <person name="Hill D."/>
            <person name="Huminiecki L."/>
            <person name="Iacono M."/>
            <person name="Ikeo K."/>
            <person name="Iwama A."/>
            <person name="Ishikawa T."/>
            <person name="Jakt M."/>
            <person name="Kanapin A."/>
            <person name="Katoh M."/>
            <person name="Kawasawa Y."/>
            <person name="Kelso J."/>
            <person name="Kitamura H."/>
            <person name="Kitano H."/>
            <person name="Kollias G."/>
            <person name="Krishnan S.P."/>
            <person name="Kruger A."/>
            <person name="Kummerfeld S.K."/>
            <person name="Kurochkin I.V."/>
            <person name="Lareau L.F."/>
            <person name="Lazarevic D."/>
            <person name="Lipovich L."/>
            <person name="Liu J."/>
            <person name="Liuni S."/>
            <person name="McWilliam S."/>
            <person name="Madan Babu M."/>
            <person name="Madera M."/>
            <person name="Marchionni L."/>
            <person name="Matsuda H."/>
            <person name="Matsuzawa S."/>
            <person name="Miki H."/>
            <person name="Mignone F."/>
            <person name="Miyake S."/>
            <person name="Morris K."/>
            <person name="Mottagui-Tabar S."/>
            <person name="Mulder N."/>
            <person name="Nakano N."/>
            <person name="Nakauchi H."/>
            <person name="Ng P."/>
            <person name="Nilsson R."/>
            <person name="Nishiguchi S."/>
            <person name="Nishikawa S."/>
            <person name="Nori F."/>
            <person name="Ohara O."/>
            <person name="Okazaki Y."/>
            <person name="Orlando V."/>
            <person name="Pang K.C."/>
            <person name="Pavan W.J."/>
            <person name="Pavesi G."/>
            <person name="Pesole G."/>
            <person name="Petrovsky N."/>
            <person name="Piazza S."/>
            <person name="Reed J."/>
            <person name="Reid J.F."/>
            <person name="Ring B.Z."/>
            <person name="Ringwald M."/>
            <person name="Rost B."/>
            <person name="Ruan Y."/>
            <person name="Salzberg S.L."/>
            <person name="Sandelin A."/>
            <person name="Schneider C."/>
            <person name="Schoenbach C."/>
            <person name="Sekiguchi K."/>
            <person name="Semple C.A."/>
            <person name="Seno S."/>
            <person name="Sessa L."/>
            <person name="Sheng Y."/>
            <person name="Shibata Y."/>
            <person name="Shimada H."/>
            <person name="Shimada K."/>
            <person name="Silva D."/>
            <person name="Sinclair B."/>
            <person name="Sperling S."/>
            <person name="Stupka E."/>
            <person name="Sugiura K."/>
            <person name="Sultana R."/>
            <person name="Takenaka Y."/>
            <person name="Taki K."/>
            <person name="Tammoja K."/>
            <person name="Tan S.L."/>
            <person name="Tang S."/>
            <person name="Taylor M.S."/>
            <person name="Tegner J."/>
            <person name="Teichmann S.A."/>
            <person name="Ueda H.R."/>
            <person name="van Nimwegen E."/>
            <person name="Verardo R."/>
            <person name="Wei C.L."/>
            <person name="Yagi K."/>
            <person name="Yamanishi H."/>
            <person name="Zabarovsky E."/>
            <person name="Zhu S."/>
            <person name="Zimmer A."/>
            <person name="Hide W."/>
            <person name="Bult C."/>
            <person name="Grimmond S.M."/>
            <person name="Teasdale R.D."/>
            <person name="Liu E.T."/>
            <person name="Brusic V."/>
            <person name="Quackenbush J."/>
            <person name="Wahlestedt C."/>
            <person name="Mattick J.S."/>
            <person name="Hume D.A."/>
            <person name="Kai C."/>
            <person name="Sasaki D."/>
            <person name="Tomaru Y."/>
            <person name="Fukuda S."/>
            <person name="Kanamori-Katayama M."/>
            <person name="Suzuki M."/>
            <person name="Aoki J."/>
            <person name="Arakawa T."/>
            <person name="Iida J."/>
            <person name="Imamura K."/>
            <person name="Itoh M."/>
            <person name="Kato T."/>
            <person name="Kawaji H."/>
            <person name="Kawagashira N."/>
            <person name="Kawashima T."/>
            <person name="Kojima M."/>
            <person name="Kondo S."/>
            <person name="Konno H."/>
            <person name="Nakano K."/>
            <person name="Ninomiya N."/>
            <person name="Nishio T."/>
            <person name="Okada M."/>
            <person name="Plessy C."/>
            <person name="Shibata K."/>
            <person name="Shiraki T."/>
            <person name="Suzuki S."/>
            <person name="Tagami M."/>
            <person name="Waki K."/>
            <person name="Watahiki A."/>
            <person name="Okamura-Oho Y."/>
            <person name="Suzuki H."/>
            <person name="Kawai J."/>
            <person name="Hayashizaki Y."/>
        </authorList>
    </citation>
    <scope>NUCLEOTIDE SEQUENCE [LARGE SCALE MRNA]</scope>
    <source>
        <strain>C57BL/6J</strain>
        <tissue>Embryonic brain</tissue>
        <tissue>Embryonic head</tissue>
        <tissue>Visual cortex</tissue>
    </source>
</reference>
<reference key="2">
    <citation type="journal article" date="2009" name="PLoS Biol.">
        <title>Lineage-specific biology revealed by a finished genome assembly of the mouse.</title>
        <authorList>
            <person name="Church D.M."/>
            <person name="Goodstadt L."/>
            <person name="Hillier L.W."/>
            <person name="Zody M.C."/>
            <person name="Goldstein S."/>
            <person name="She X."/>
            <person name="Bult C.J."/>
            <person name="Agarwala R."/>
            <person name="Cherry J.L."/>
            <person name="DiCuccio M."/>
            <person name="Hlavina W."/>
            <person name="Kapustin Y."/>
            <person name="Meric P."/>
            <person name="Maglott D."/>
            <person name="Birtle Z."/>
            <person name="Marques A.C."/>
            <person name="Graves T."/>
            <person name="Zhou S."/>
            <person name="Teague B."/>
            <person name="Potamousis K."/>
            <person name="Churas C."/>
            <person name="Place M."/>
            <person name="Herschleb J."/>
            <person name="Runnheim R."/>
            <person name="Forrest D."/>
            <person name="Amos-Landgraf J."/>
            <person name="Schwartz D.C."/>
            <person name="Cheng Z."/>
            <person name="Lindblad-Toh K."/>
            <person name="Eichler E.E."/>
            <person name="Ponting C.P."/>
        </authorList>
    </citation>
    <scope>NUCLEOTIDE SEQUENCE [LARGE SCALE GENOMIC DNA]</scope>
    <source>
        <strain>C57BL/6J</strain>
    </source>
</reference>
<reference key="3">
    <citation type="journal article" date="2004" name="Genome Res.">
        <title>The status, quality, and expansion of the NIH full-length cDNA project: the Mammalian Gene Collection (MGC).</title>
        <authorList>
            <consortium name="The MGC Project Team"/>
        </authorList>
    </citation>
    <scope>NUCLEOTIDE SEQUENCE [LARGE SCALE MRNA]</scope>
    <source>
        <strain>C57BL/6J</strain>
        <tissue>Embryonic brain</tissue>
    </source>
</reference>
<dbReference type="EC" id="3.1.-.-"/>
<dbReference type="EMBL" id="AK048421">
    <property type="protein sequence ID" value="BAC33331.1"/>
    <property type="molecule type" value="mRNA"/>
</dbReference>
<dbReference type="EMBL" id="AK158740">
    <property type="protein sequence ID" value="BAE34636.1"/>
    <property type="molecule type" value="mRNA"/>
</dbReference>
<dbReference type="EMBL" id="AK165755">
    <property type="protein sequence ID" value="BAE38367.1"/>
    <property type="molecule type" value="mRNA"/>
</dbReference>
<dbReference type="EMBL" id="AL513354">
    <property type="status" value="NOT_ANNOTATED_CDS"/>
    <property type="molecule type" value="Genomic_DNA"/>
</dbReference>
<dbReference type="EMBL" id="BC057550">
    <property type="protein sequence ID" value="AAH57550.1"/>
    <property type="molecule type" value="mRNA"/>
</dbReference>
<dbReference type="CCDS" id="CCDS37164.1"/>
<dbReference type="RefSeq" id="NP_001346060.1">
    <property type="nucleotide sequence ID" value="NM_001359131.1"/>
</dbReference>
<dbReference type="RefSeq" id="NP_001346061.1">
    <property type="nucleotide sequence ID" value="NM_001359132.1"/>
</dbReference>
<dbReference type="RefSeq" id="NP_001402952.1">
    <property type="nucleotide sequence ID" value="NM_001416023.1"/>
</dbReference>
<dbReference type="RefSeq" id="NP_001402953.1">
    <property type="nucleotide sequence ID" value="NM_001416024.1"/>
</dbReference>
<dbReference type="RefSeq" id="NP_001402954.1">
    <property type="nucleotide sequence ID" value="NM_001416025.1"/>
</dbReference>
<dbReference type="RefSeq" id="NP_001402955.1">
    <property type="nucleotide sequence ID" value="NM_001416026.1"/>
</dbReference>
<dbReference type="RefSeq" id="NP_766198.1">
    <property type="nucleotide sequence ID" value="NM_172610.4"/>
</dbReference>
<dbReference type="RefSeq" id="XP_006520880.1">
    <property type="nucleotide sequence ID" value="XM_006520817.5"/>
</dbReference>
<dbReference type="RefSeq" id="XP_006520881.1">
    <property type="nucleotide sequence ID" value="XM_006520818.3"/>
</dbReference>
<dbReference type="RefSeq" id="XP_006520882.1">
    <property type="nucleotide sequence ID" value="XM_006520819.2"/>
</dbReference>
<dbReference type="RefSeq" id="XP_006520883.1">
    <property type="nucleotide sequence ID" value="XM_006520820.3"/>
</dbReference>
<dbReference type="RefSeq" id="XP_017172062.1">
    <property type="nucleotide sequence ID" value="XM_017316573.1"/>
</dbReference>
<dbReference type="SMR" id="Q91ZG2"/>
<dbReference type="FunCoup" id="Q91ZG2">
    <property type="interactions" value="30"/>
</dbReference>
<dbReference type="STRING" id="10090.ENSMUSP00000105096"/>
<dbReference type="iPTMnet" id="Q91ZG2"/>
<dbReference type="PhosphoSitePlus" id="Q91ZG2"/>
<dbReference type="PaxDb" id="10090-ENSMUSP00000041981"/>
<dbReference type="ProteomicsDB" id="290307"/>
<dbReference type="Antibodypedia" id="27528">
    <property type="antibodies" value="125 antibodies from 20 providers"/>
</dbReference>
<dbReference type="DNASU" id="223726"/>
<dbReference type="Ensembl" id="ENSMUST00000046168.12">
    <property type="protein sequence ID" value="ENSMUSP00000041981.6"/>
    <property type="gene ID" value="ENSMUSG00000041708.13"/>
</dbReference>
<dbReference type="Ensembl" id="ENSMUST00000109470.8">
    <property type="protein sequence ID" value="ENSMUSP00000105096.2"/>
    <property type="gene ID" value="ENSMUSG00000041708.13"/>
</dbReference>
<dbReference type="GeneID" id="223726"/>
<dbReference type="KEGG" id="mmu:223726"/>
<dbReference type="UCSC" id="uc007xbk.1">
    <property type="organism name" value="mouse"/>
</dbReference>
<dbReference type="AGR" id="MGI:106316"/>
<dbReference type="CTD" id="758"/>
<dbReference type="MGI" id="MGI:106316">
    <property type="gene designation" value="Mpped1"/>
</dbReference>
<dbReference type="VEuPathDB" id="HostDB:ENSMUSG00000041708"/>
<dbReference type="eggNOG" id="KOG3947">
    <property type="taxonomic scope" value="Eukaryota"/>
</dbReference>
<dbReference type="GeneTree" id="ENSGT00390000007681"/>
<dbReference type="HOGENOM" id="CLU_041441_1_0_1"/>
<dbReference type="InParanoid" id="Q91ZG2"/>
<dbReference type="OMA" id="IKTRICM"/>
<dbReference type="OrthoDB" id="630188at2759"/>
<dbReference type="PhylomeDB" id="Q91ZG2"/>
<dbReference type="TreeFam" id="TF314305"/>
<dbReference type="BioGRID-ORCS" id="223726">
    <property type="hits" value="1 hit in 76 CRISPR screens"/>
</dbReference>
<dbReference type="ChiTaRS" id="Mpped1">
    <property type="organism name" value="mouse"/>
</dbReference>
<dbReference type="PRO" id="PR:Q91ZG2"/>
<dbReference type="Proteomes" id="UP000000589">
    <property type="component" value="Chromosome 15"/>
</dbReference>
<dbReference type="RNAct" id="Q91ZG2">
    <property type="molecule type" value="protein"/>
</dbReference>
<dbReference type="Bgee" id="ENSMUSG00000041708">
    <property type="expression patterns" value="Expressed in cortical plate and 55 other cell types or tissues"/>
</dbReference>
<dbReference type="ExpressionAtlas" id="Q91ZG2">
    <property type="expression patterns" value="baseline and differential"/>
</dbReference>
<dbReference type="GO" id="GO:0016787">
    <property type="term" value="F:hydrolase activity"/>
    <property type="evidence" value="ECO:0007669"/>
    <property type="project" value="UniProtKB-KW"/>
</dbReference>
<dbReference type="CDD" id="cd07379">
    <property type="entry name" value="MPP_239FB"/>
    <property type="match status" value="1"/>
</dbReference>
<dbReference type="Gene3D" id="3.60.21.10">
    <property type="match status" value="1"/>
</dbReference>
<dbReference type="InterPro" id="IPR024201">
    <property type="entry name" value="Calcineurin-like_Pesterase"/>
</dbReference>
<dbReference type="InterPro" id="IPR004843">
    <property type="entry name" value="Calcineurin-like_PHP_ApaH"/>
</dbReference>
<dbReference type="InterPro" id="IPR029052">
    <property type="entry name" value="Metallo-depent_PP-like"/>
</dbReference>
<dbReference type="InterPro" id="IPR051693">
    <property type="entry name" value="UPF0046_metallophosphoest"/>
</dbReference>
<dbReference type="PANTHER" id="PTHR12905">
    <property type="entry name" value="METALLOPHOSPHOESTERASE"/>
    <property type="match status" value="1"/>
</dbReference>
<dbReference type="PANTHER" id="PTHR12905:SF31">
    <property type="entry name" value="METALLOPHOSPHOESTERASE DOMAIN-CONTAINING PROTEIN 1"/>
    <property type="match status" value="1"/>
</dbReference>
<dbReference type="Pfam" id="PF00149">
    <property type="entry name" value="Metallophos"/>
    <property type="match status" value="1"/>
</dbReference>
<dbReference type="PIRSF" id="PIRSF035808">
    <property type="entry name" value="Pdiesterase_Brain_239"/>
    <property type="match status" value="1"/>
</dbReference>
<dbReference type="SUPFAM" id="SSF56300">
    <property type="entry name" value="Metallo-dependent phosphatases"/>
    <property type="match status" value="1"/>
</dbReference>
<name>MPPD1_MOUSE</name>
<protein>
    <recommendedName>
        <fullName>Metallophosphoesterase domain-containing protein 1</fullName>
        <ecNumber>3.1.-.-</ecNumber>
    </recommendedName>
</protein>
<accession>Q91ZG2</accession>
<accession>A6PW09</accession>
<accession>Q3TMS4</accession>
<accession>Q3TYC7</accession>
<evidence type="ECO:0000250" key="1"/>
<evidence type="ECO:0000305" key="2"/>
<gene>
    <name type="primary">Mpped1</name>
    <name type="synonym">D15Bwg0669e</name>
</gene>
<proteinExistence type="evidence at transcript level"/>
<comment type="function">
    <text evidence="1">May have metallophosphoesterase activity (in vitro).</text>
</comment>
<comment type="similarity">
    <text evidence="2">Belongs to the UPF0046 family.</text>
</comment>
<sequence>MWRPRWDPGILKAEALALLPCGLGMAFSQSHVMASRRHQHGRLIIEVDEYSSNPTQAFTFYNINQGRFQPPHVQMVDPVPHDAPKPPGYTRFVCVSDTHSRTDPIQMPYGDVLIHAGDFTELGLPSEVKKFNEWLGSLPYEYKIVIAGNHELTFDQEFMADLIKQDFYYFPSVSKLKPENYENVQSLLTNCIYLQDSEVTVRGFRIYGSPWQPWFYGWGFNLPRGQALLEKWNLIPEGVDILITHGPPLGFLDWVPKKMQRVGCVELLNTVQRRVQPRLHVFGHIHEGYGVMADGTTTYVNASVCTVNYQPVNPPIVIDLPTPRNS</sequence>
<feature type="chain" id="PRO_0000053404" description="Metallophosphoesterase domain-containing protein 1">
    <location>
        <begin position="1"/>
        <end position="326"/>
    </location>
</feature>
<feature type="sequence conflict" description="In Ref. 1; BAE38367." evidence="2" ref="1">
    <original>N</original>
    <variation>D</variation>
    <location>
        <position position="183"/>
    </location>
</feature>